<protein>
    <recommendedName>
        <fullName evidence="1">UPF0342 protein GK0640</fullName>
    </recommendedName>
</protein>
<feature type="chain" id="PRO_0000109975" description="UPF0342 protein GK0640">
    <location>
        <begin position="1"/>
        <end position="119"/>
    </location>
</feature>
<feature type="helix" evidence="2">
    <location>
        <begin position="6"/>
        <end position="18"/>
    </location>
</feature>
<feature type="helix" evidence="2">
    <location>
        <begin position="20"/>
        <end position="33"/>
    </location>
</feature>
<feature type="helix" evidence="2">
    <location>
        <begin position="38"/>
        <end position="57"/>
    </location>
</feature>
<feature type="helix" evidence="2">
    <location>
        <begin position="64"/>
        <end position="77"/>
    </location>
</feature>
<feature type="helix" evidence="2">
    <location>
        <begin position="81"/>
        <end position="113"/>
    </location>
</feature>
<proteinExistence type="evidence at protein level"/>
<dbReference type="EMBL" id="BA000043">
    <property type="protein sequence ID" value="BAD74925.1"/>
    <property type="molecule type" value="Genomic_DNA"/>
</dbReference>
<dbReference type="RefSeq" id="WP_011230144.1">
    <property type="nucleotide sequence ID" value="NC_006510.1"/>
</dbReference>
<dbReference type="PDB" id="2OEQ">
    <property type="method" value="X-ray"/>
    <property type="resolution" value="2.90 A"/>
    <property type="chains" value="A/B/C/D=1-119"/>
</dbReference>
<dbReference type="PDBsum" id="2OEQ"/>
<dbReference type="SMR" id="Q5L2A5"/>
<dbReference type="STRING" id="235909.GK0640"/>
<dbReference type="KEGG" id="gka:GK0640"/>
<dbReference type="eggNOG" id="COG3679">
    <property type="taxonomic scope" value="Bacteria"/>
</dbReference>
<dbReference type="HOGENOM" id="CLU_140243_3_0_9"/>
<dbReference type="EvolutionaryTrace" id="Q5L2A5"/>
<dbReference type="Proteomes" id="UP000001172">
    <property type="component" value="Chromosome"/>
</dbReference>
<dbReference type="Gene3D" id="1.20.1500.10">
    <property type="entry name" value="YheA/YmcA-like"/>
    <property type="match status" value="1"/>
</dbReference>
<dbReference type="HAMAP" id="MF_01526">
    <property type="entry name" value="UPF0342"/>
    <property type="match status" value="1"/>
</dbReference>
<dbReference type="InterPro" id="IPR010368">
    <property type="entry name" value="Com_YlbF"/>
</dbReference>
<dbReference type="InterPro" id="IPR023378">
    <property type="entry name" value="YheA/YmcA-like_dom_sf"/>
</dbReference>
<dbReference type="Pfam" id="PF06133">
    <property type="entry name" value="Com_YlbF"/>
    <property type="match status" value="1"/>
</dbReference>
<dbReference type="SUPFAM" id="SSF158622">
    <property type="entry name" value="YheA/YmcA-like"/>
    <property type="match status" value="1"/>
</dbReference>
<gene>
    <name type="ordered locus">GK0640</name>
</gene>
<name>Y640_GEOKA</name>
<accession>Q5L2A5</accession>
<comment type="similarity">
    <text evidence="1">Belongs to the UPF0342 family.</text>
</comment>
<evidence type="ECO:0000255" key="1">
    <source>
        <dbReference type="HAMAP-Rule" id="MF_01526"/>
    </source>
</evidence>
<evidence type="ECO:0007829" key="2">
    <source>
        <dbReference type="PDB" id="2OEQ"/>
    </source>
</evidence>
<organism>
    <name type="scientific">Geobacillus kaustophilus (strain HTA426)</name>
    <dbReference type="NCBI Taxonomy" id="235909"/>
    <lineage>
        <taxon>Bacteria</taxon>
        <taxon>Bacillati</taxon>
        <taxon>Bacillota</taxon>
        <taxon>Bacilli</taxon>
        <taxon>Bacillales</taxon>
        <taxon>Anoxybacillaceae</taxon>
        <taxon>Geobacillus</taxon>
        <taxon>Geobacillus thermoleovorans group</taxon>
    </lineage>
</organism>
<keyword id="KW-0002">3D-structure</keyword>
<keyword id="KW-1185">Reference proteome</keyword>
<sequence length="119" mass="13836">MSEPLHALAKQLEQAIRASEPFQQLKRAYEDVRRDETAYRMFANVRDIQLQLHEKQMRGAAILPDEIEQAQKAMALAQQNEKLARLMALEQQMSMTIAEVQQIAMKPLEELHRSFMEGR</sequence>
<reference key="1">
    <citation type="journal article" date="2004" name="Nucleic Acids Res.">
        <title>Thermoadaptation trait revealed by the genome sequence of thermophilic Geobacillus kaustophilus.</title>
        <authorList>
            <person name="Takami H."/>
            <person name="Takaki Y."/>
            <person name="Chee G.-J."/>
            <person name="Nishi S."/>
            <person name="Shimamura S."/>
            <person name="Suzuki H."/>
            <person name="Matsui S."/>
            <person name="Uchiyama I."/>
        </authorList>
    </citation>
    <scope>NUCLEOTIDE SEQUENCE [LARGE SCALE GENOMIC DNA]</scope>
    <source>
        <strain>HTA426</strain>
    </source>
</reference>